<evidence type="ECO:0000255" key="1">
    <source>
        <dbReference type="HAMAP-Rule" id="MF_01371"/>
    </source>
</evidence>
<evidence type="ECO:0000305" key="2"/>
<comment type="subunit">
    <text evidence="1">Part of the 50S ribosomal subunit.</text>
</comment>
<comment type="similarity">
    <text evidence="1">Belongs to the universal ribosomal protein uL30 family.</text>
</comment>
<name>RL30_CERS1</name>
<sequence length="62" mass="6915">MAKTIIVKQVRSAARRPAVQTAVLKGLGLNKMHRTRELEDTPSIRGMVAKIPHLVEIIEERG</sequence>
<reference key="1">
    <citation type="submission" date="2007-02" db="EMBL/GenBank/DDBJ databases">
        <title>Complete sequence of chromosome 1 of Rhodobacter sphaeroides ATCC 17029.</title>
        <authorList>
            <person name="Copeland A."/>
            <person name="Lucas S."/>
            <person name="Lapidus A."/>
            <person name="Barry K."/>
            <person name="Detter J.C."/>
            <person name="Glavina del Rio T."/>
            <person name="Hammon N."/>
            <person name="Israni S."/>
            <person name="Dalin E."/>
            <person name="Tice H."/>
            <person name="Pitluck S."/>
            <person name="Kiss H."/>
            <person name="Brettin T."/>
            <person name="Bruce D."/>
            <person name="Han C."/>
            <person name="Tapia R."/>
            <person name="Gilna P."/>
            <person name="Schmutz J."/>
            <person name="Larimer F."/>
            <person name="Land M."/>
            <person name="Hauser L."/>
            <person name="Kyrpides N."/>
            <person name="Mikhailova N."/>
            <person name="Richardson P."/>
            <person name="Mackenzie C."/>
            <person name="Choudhary M."/>
            <person name="Donohue T.J."/>
            <person name="Kaplan S."/>
        </authorList>
    </citation>
    <scope>NUCLEOTIDE SEQUENCE [LARGE SCALE GENOMIC DNA]</scope>
    <source>
        <strain>ATCC 17029 / ATH 2.4.9</strain>
    </source>
</reference>
<dbReference type="EMBL" id="CP000577">
    <property type="protein sequence ID" value="ABN75495.1"/>
    <property type="molecule type" value="Genomic_DNA"/>
</dbReference>
<dbReference type="RefSeq" id="WP_002722524.1">
    <property type="nucleotide sequence ID" value="NC_009049.1"/>
</dbReference>
<dbReference type="SMR" id="A3PGM9"/>
<dbReference type="GeneID" id="67445518"/>
<dbReference type="KEGG" id="rsh:Rsph17029_0379"/>
<dbReference type="HOGENOM" id="CLU_131047_1_2_5"/>
<dbReference type="GO" id="GO:0022625">
    <property type="term" value="C:cytosolic large ribosomal subunit"/>
    <property type="evidence" value="ECO:0007669"/>
    <property type="project" value="TreeGrafter"/>
</dbReference>
<dbReference type="GO" id="GO:0003735">
    <property type="term" value="F:structural constituent of ribosome"/>
    <property type="evidence" value="ECO:0007669"/>
    <property type="project" value="InterPro"/>
</dbReference>
<dbReference type="GO" id="GO:0006412">
    <property type="term" value="P:translation"/>
    <property type="evidence" value="ECO:0007669"/>
    <property type="project" value="UniProtKB-UniRule"/>
</dbReference>
<dbReference type="CDD" id="cd01658">
    <property type="entry name" value="Ribosomal_L30"/>
    <property type="match status" value="1"/>
</dbReference>
<dbReference type="Gene3D" id="3.30.1390.20">
    <property type="entry name" value="Ribosomal protein L30, ferredoxin-like fold domain"/>
    <property type="match status" value="1"/>
</dbReference>
<dbReference type="HAMAP" id="MF_01371_B">
    <property type="entry name" value="Ribosomal_uL30_B"/>
    <property type="match status" value="1"/>
</dbReference>
<dbReference type="InterPro" id="IPR036919">
    <property type="entry name" value="Ribo_uL30_ferredoxin-like_sf"/>
</dbReference>
<dbReference type="InterPro" id="IPR005996">
    <property type="entry name" value="Ribosomal_uL30_bac-type"/>
</dbReference>
<dbReference type="InterPro" id="IPR016082">
    <property type="entry name" value="Ribosomal_uL30_ferredoxin-like"/>
</dbReference>
<dbReference type="NCBIfam" id="TIGR01308">
    <property type="entry name" value="rpmD_bact"/>
    <property type="match status" value="1"/>
</dbReference>
<dbReference type="PANTHER" id="PTHR15892:SF2">
    <property type="entry name" value="LARGE RIBOSOMAL SUBUNIT PROTEIN UL30M"/>
    <property type="match status" value="1"/>
</dbReference>
<dbReference type="PANTHER" id="PTHR15892">
    <property type="entry name" value="MITOCHONDRIAL RIBOSOMAL PROTEIN L30"/>
    <property type="match status" value="1"/>
</dbReference>
<dbReference type="Pfam" id="PF00327">
    <property type="entry name" value="Ribosomal_L30"/>
    <property type="match status" value="1"/>
</dbReference>
<dbReference type="PIRSF" id="PIRSF002211">
    <property type="entry name" value="Ribosomal_L30_bac-type"/>
    <property type="match status" value="1"/>
</dbReference>
<dbReference type="SUPFAM" id="SSF55129">
    <property type="entry name" value="Ribosomal protein L30p/L7e"/>
    <property type="match status" value="1"/>
</dbReference>
<organism>
    <name type="scientific">Cereibacter sphaeroides (strain ATCC 17029 / ATH 2.4.9)</name>
    <name type="common">Rhodobacter sphaeroides</name>
    <dbReference type="NCBI Taxonomy" id="349101"/>
    <lineage>
        <taxon>Bacteria</taxon>
        <taxon>Pseudomonadati</taxon>
        <taxon>Pseudomonadota</taxon>
        <taxon>Alphaproteobacteria</taxon>
        <taxon>Rhodobacterales</taxon>
        <taxon>Paracoccaceae</taxon>
        <taxon>Cereibacter</taxon>
    </lineage>
</organism>
<keyword id="KW-0687">Ribonucleoprotein</keyword>
<keyword id="KW-0689">Ribosomal protein</keyword>
<accession>A3PGM9</accession>
<feature type="chain" id="PRO_1000056096" description="Large ribosomal subunit protein uL30">
    <location>
        <begin position="1"/>
        <end position="62"/>
    </location>
</feature>
<protein>
    <recommendedName>
        <fullName evidence="1">Large ribosomal subunit protein uL30</fullName>
    </recommendedName>
    <alternativeName>
        <fullName evidence="2">50S ribosomal protein L30</fullName>
    </alternativeName>
</protein>
<gene>
    <name evidence="1" type="primary">rpmD</name>
    <name type="ordered locus">Rsph17029_0379</name>
</gene>
<proteinExistence type="inferred from homology"/>